<name>RDRP_TCV</name>
<accession>P17460</accession>
<accession>Q7TD17</accession>
<accession>Q7TD21</accession>
<accession>Q88486</accession>
<protein>
    <recommendedName>
        <fullName>RNA-directed RNA polymerase</fullName>
        <ecNumber>2.7.7.48</ecNumber>
    </recommendedName>
    <alternativeName>
        <fullName>Protein p88</fullName>
    </alternativeName>
    <component>
        <recommendedName>
            <fullName>Protein p28</fullName>
        </recommendedName>
    </component>
</protein>
<reference key="1">
    <citation type="journal article" date="1989" name="Virology">
        <title>The genome structure of turnip crinkle virus.</title>
        <authorList>
            <person name="Carrington J.C."/>
            <person name="Heaton L.A."/>
            <person name="Zuidema D."/>
            <person name="Hillman B.I."/>
            <person name="Morris T.J."/>
        </authorList>
    </citation>
    <scope>NUCLEOTIDE SEQUENCE [GENOMIC RNA]</scope>
</reference>
<reference key="2">
    <citation type="submission" date="2003-06" db="EMBL/GenBank/DDBJ databases">
        <authorList>
            <person name="Ryabov E.V."/>
        </authorList>
    </citation>
    <scope>NUCLEOTIDE SEQUENCE [GENOMIC RNA]</scope>
    <source>
        <strain>Infectious clone UK</strain>
    </source>
</reference>
<reference key="3">
    <citation type="submission" date="2014-05" db="EMBL/GenBank/DDBJ databases">
        <authorList>
            <person name="Carrington J.C."/>
            <person name="Heaton L.A."/>
            <person name="Zuidema D."/>
            <person name="Hillman B.I."/>
            <person name="Morris T.J."/>
        </authorList>
    </citation>
    <scope>SEQUENCE REVISION</scope>
</reference>
<sequence>MPLLHTLNTALAVGLLGARYYPEVQTFLGLPDYVGHMKNVVRSVFQGSGLVVVSSDTVGVRGTYSNRGQIGSSLGCILAVPDSGADIEIDLDRLVGTEEEATSCLVEAVGSTADVPRRRVRQKGRFAMHAVNAAKLHFCGVPKPTEANRLAVSKWLVQYCKERHVVDSHIRTIVNTALPRVFTPDAEDIQVVLDLHSVRAHDHRNALAEAGKVRKWWVNLAMHPMTGRSWSRAWRRLCRLPDDQAISFVRXGCLRELVGRETQISRGENPAMRVFPLANPPKVRRIFHICGMGNGLDFGVHNNSLNNLRRGLMERVFYVEDAQKQLKPAPQPIPGIFGKLSGIRRRLVRLAGNHTPVPREKYPSFYKGRRATIYQKALDSLHDRPVSRKDAELKTFVKAEKINFTAKKDPAPRVIQPRDPRYNIEVGKYLKPYEHHLYRAIDAMWGGPTVLKGYDVGELGNIMSNTWDKFRKTCAIGFDMKRFDQHVSVDALRWEHSVYNAGFNCPELAQLLTWQLTNKGVGRASDGFIKYQVDGCRMSGDVNTALGNCLLACSITKYLMKGIKCKLINNGDDCVLFFEADEVDRVRERLHHWIDFGFQCIAEEPQYELEKVEFCQMSPIFDGEGWVMVRNPRVSLSKDSYSTTQWANEKDAARWLAAIGECGLAIAGGVPVLQSYYSCLKRNFGPLAGDYKKKMQDVSFDSGFYRLSKNGMRGSKDVSQDARFSFYRGFGYTPDEQEALEEYYDNLQLLCEWDPTGYKEELSDRWILNEFPTTL</sequence>
<keyword id="KW-0547">Nucleotide-binding</keyword>
<keyword id="KW-0548">Nucleotidyltransferase</keyword>
<keyword id="KW-1185">Reference proteome</keyword>
<keyword id="KW-1159">RNA suppression of termination</keyword>
<keyword id="KW-0696">RNA-directed RNA polymerase</keyword>
<keyword id="KW-0808">Transferase</keyword>
<keyword id="KW-0693">Viral RNA replication</keyword>
<proteinExistence type="predicted"/>
<feature type="chain" id="PRO_0000040204" description="RNA-directed RNA polymerase">
    <location>
        <begin position="1"/>
        <end position="775"/>
    </location>
</feature>
<feature type="chain" id="PRO_0000040205" description="Protein p28">
    <location>
        <begin position="1"/>
        <end position="250"/>
    </location>
</feature>
<feature type="domain" description="RdRp catalytic" evidence="1">
    <location>
        <begin position="473"/>
        <end position="586"/>
    </location>
</feature>
<feature type="sequence variant" description="In strain: Infectious clone UK.">
    <original>R</original>
    <variation>Q</variation>
    <location>
        <position position="42"/>
    </location>
</feature>
<feature type="sequence variant" description="In strain: Infectious clone UK.">
    <original>D</original>
    <variation>S</variation>
    <location>
        <position position="56"/>
    </location>
</feature>
<feature type="sequence variant" description="In strain: Infectious clone UK.">
    <original>D</original>
    <variation>N</variation>
    <location>
        <position position="202"/>
    </location>
</feature>
<feature type="sequence variant" description="In strain: Infectious clone UK.">
    <original>R</original>
    <variation>K</variation>
    <location>
        <position position="345"/>
    </location>
</feature>
<feature type="sequence variant" description="In strain: Infectious clone UK.">
    <original>D</original>
    <variation>E</variation>
    <location>
        <position position="581"/>
    </location>
</feature>
<feature type="sequence variant" description="In strain: Infectious clone UK.">
    <original>D</original>
    <variation>N</variation>
    <location>
        <position position="717"/>
    </location>
</feature>
<feature type="sequence variant">
    <original>Q</original>
    <variation>E</variation>
    <location>
        <position position="748"/>
    </location>
</feature>
<organismHost>
    <name type="scientific">Brassica napus subsp. rapifera</name>
    <dbReference type="NCBI Taxonomy" id="3709"/>
</organismHost>
<organismHost>
    <name type="scientific">Hypomyces</name>
    <dbReference type="NCBI Taxonomy" id="5130"/>
</organismHost>
<organismHost>
    <name type="scientific">Moricandia arvensis</name>
    <name type="common">Purple mistress</name>
    <name type="synonym">Brassica arvensis</name>
    <dbReference type="NCBI Taxonomy" id="180540"/>
</organismHost>
<gene>
    <name type="ORF">ORF1</name>
</gene>
<comment type="function">
    <text evidence="2">RNA-dependent RNA polymerase that plays an essential role in the virus replication.</text>
</comment>
<comment type="catalytic activity">
    <reaction evidence="1">
        <text>RNA(n) + a ribonucleoside 5'-triphosphate = RNA(n+1) + diphosphate</text>
        <dbReference type="Rhea" id="RHEA:21248"/>
        <dbReference type="Rhea" id="RHEA-COMP:14527"/>
        <dbReference type="Rhea" id="RHEA-COMP:17342"/>
        <dbReference type="ChEBI" id="CHEBI:33019"/>
        <dbReference type="ChEBI" id="CHEBI:61557"/>
        <dbReference type="ChEBI" id="CHEBI:140395"/>
        <dbReference type="EC" id="2.7.7.48"/>
    </reaction>
</comment>
<comment type="miscellaneous">
    <text>Readthrough of the terminator UAG occurs at position 251.</text>
</comment>
<evidence type="ECO:0000255" key="1">
    <source>
        <dbReference type="PROSITE-ProRule" id="PRU00539"/>
    </source>
</evidence>
<evidence type="ECO:0000305" key="2"/>
<organism>
    <name type="scientific">Turnip crinkle virus</name>
    <name type="common">TCV</name>
    <dbReference type="NCBI Taxonomy" id="11988"/>
    <lineage>
        <taxon>Viruses</taxon>
        <taxon>Riboviria</taxon>
        <taxon>Orthornavirae</taxon>
        <taxon>Kitrinoviricota</taxon>
        <taxon>Tolucaviricetes</taxon>
        <taxon>Tolivirales</taxon>
        <taxon>Tombusviridae</taxon>
        <taxon>Procedovirinae</taxon>
        <taxon>Betacarmovirus</taxon>
        <taxon>Betacarmovirus brassicae</taxon>
    </lineage>
</organism>
<dbReference type="EC" id="2.7.7.48"/>
<dbReference type="EMBL" id="M22445">
    <property type="protein sequence ID" value="AAA96968.2"/>
    <property type="molecule type" value="Genomic_RNA"/>
</dbReference>
<dbReference type="EMBL" id="M22445">
    <property type="protein sequence ID" value="AAA96969.3"/>
    <property type="molecule type" value="Genomic_RNA"/>
</dbReference>
<dbReference type="EMBL" id="AY312063">
    <property type="protein sequence ID" value="AAP78490.1"/>
    <property type="molecule type" value="Genomic_RNA"/>
</dbReference>
<dbReference type="EMBL" id="AY312063">
    <property type="protein sequence ID" value="AAP78486.1"/>
    <property type="molecule type" value="Genomic_RNA"/>
</dbReference>
<dbReference type="PIR" id="JA0110">
    <property type="entry name" value="RRVETC"/>
</dbReference>
<dbReference type="RefSeq" id="NP_620720.3">
    <property type="nucleotide sequence ID" value="NC_003821.3"/>
</dbReference>
<dbReference type="RefSeq" id="NP_620721.2">
    <property type="nucleotide sequence ID" value="NC_003821.3"/>
</dbReference>
<dbReference type="KEGG" id="vg:944391"/>
<dbReference type="KEGG" id="vg:944392"/>
<dbReference type="OrthoDB" id="12338at10239"/>
<dbReference type="Proteomes" id="UP000007403">
    <property type="component" value="Genome"/>
</dbReference>
<dbReference type="Proteomes" id="UP000009133">
    <property type="component" value="Genome"/>
</dbReference>
<dbReference type="GO" id="GO:0000166">
    <property type="term" value="F:nucleotide binding"/>
    <property type="evidence" value="ECO:0007669"/>
    <property type="project" value="UniProtKB-KW"/>
</dbReference>
<dbReference type="GO" id="GO:0003723">
    <property type="term" value="F:RNA binding"/>
    <property type="evidence" value="ECO:0007669"/>
    <property type="project" value="InterPro"/>
</dbReference>
<dbReference type="GO" id="GO:0003968">
    <property type="term" value="F:RNA-directed RNA polymerase activity"/>
    <property type="evidence" value="ECO:0007669"/>
    <property type="project" value="UniProtKB-KW"/>
</dbReference>
<dbReference type="GO" id="GO:0039694">
    <property type="term" value="P:viral RNA genome replication"/>
    <property type="evidence" value="ECO:0007669"/>
    <property type="project" value="InterPro"/>
</dbReference>
<dbReference type="CDD" id="cd23240">
    <property type="entry name" value="Betacarmovirus_RdRp"/>
    <property type="match status" value="1"/>
</dbReference>
<dbReference type="Gene3D" id="3.30.70.270">
    <property type="match status" value="1"/>
</dbReference>
<dbReference type="InterPro" id="IPR043502">
    <property type="entry name" value="DNA/RNA_pol_sf"/>
</dbReference>
<dbReference type="InterPro" id="IPR043128">
    <property type="entry name" value="Rev_trsase/Diguanyl_cyclase"/>
</dbReference>
<dbReference type="InterPro" id="IPR007094">
    <property type="entry name" value="RNA-dir_pol_PSvirus"/>
</dbReference>
<dbReference type="InterPro" id="IPR002166">
    <property type="entry name" value="RNA_pol_HCV"/>
</dbReference>
<dbReference type="Pfam" id="PF00998">
    <property type="entry name" value="RdRP_3"/>
    <property type="match status" value="1"/>
</dbReference>
<dbReference type="SUPFAM" id="SSF56672">
    <property type="entry name" value="DNA/RNA polymerases"/>
    <property type="match status" value="1"/>
</dbReference>
<dbReference type="PROSITE" id="PS50507">
    <property type="entry name" value="RDRP_SSRNA_POS"/>
    <property type="match status" value="1"/>
</dbReference>